<feature type="chain" id="PRO_1000057837" description="Protein NrdI">
    <location>
        <begin position="1"/>
        <end position="134"/>
    </location>
</feature>
<evidence type="ECO:0000255" key="1">
    <source>
        <dbReference type="HAMAP-Rule" id="MF_00128"/>
    </source>
</evidence>
<accession>A8GI78</accession>
<sequence>MNPLVYFSSSSENTHRFVEKLSLPAMRIPIAGARSKLLMETPYILIVPSYGGGSAVGAVPIQVIRFLNDPQNRAFLRGVIAAGNTNFGAAYGIAGDIIAKKCQVPFLYRFELLGTTQDVANVRQGVTAFWQRQN</sequence>
<gene>
    <name evidence="1" type="primary">nrdI</name>
    <name type="ordered locus">Spro_3722</name>
</gene>
<comment type="function">
    <text evidence="1">Probably involved in ribonucleotide reductase function.</text>
</comment>
<comment type="similarity">
    <text evidence="1">Belongs to the NrdI family.</text>
</comment>
<name>NRDI_SERP5</name>
<dbReference type="EMBL" id="CP000826">
    <property type="protein sequence ID" value="ABV42818.1"/>
    <property type="molecule type" value="Genomic_DNA"/>
</dbReference>
<dbReference type="SMR" id="A8GI78"/>
<dbReference type="STRING" id="399741.Spro_3722"/>
<dbReference type="KEGG" id="spe:Spro_3722"/>
<dbReference type="eggNOG" id="COG1780">
    <property type="taxonomic scope" value="Bacteria"/>
</dbReference>
<dbReference type="HOGENOM" id="CLU_114845_0_0_6"/>
<dbReference type="OrthoDB" id="350535at2"/>
<dbReference type="GO" id="GO:0010181">
    <property type="term" value="F:FMN binding"/>
    <property type="evidence" value="ECO:0007669"/>
    <property type="project" value="InterPro"/>
</dbReference>
<dbReference type="GO" id="GO:0036211">
    <property type="term" value="P:protein modification process"/>
    <property type="evidence" value="ECO:0007669"/>
    <property type="project" value="InterPro"/>
</dbReference>
<dbReference type="FunFam" id="3.40.50.360:FF:000005">
    <property type="entry name" value="Protein NrdI"/>
    <property type="match status" value="1"/>
</dbReference>
<dbReference type="Gene3D" id="3.40.50.360">
    <property type="match status" value="1"/>
</dbReference>
<dbReference type="HAMAP" id="MF_00128">
    <property type="entry name" value="NrdI"/>
    <property type="match status" value="1"/>
</dbReference>
<dbReference type="InterPro" id="IPR029039">
    <property type="entry name" value="Flavoprotein-like_sf"/>
</dbReference>
<dbReference type="InterPro" id="IPR020852">
    <property type="entry name" value="RNR_Ib_NrdI_bac"/>
</dbReference>
<dbReference type="InterPro" id="IPR004465">
    <property type="entry name" value="RNR_NrdI"/>
</dbReference>
<dbReference type="NCBIfam" id="TIGR00333">
    <property type="entry name" value="nrdI"/>
    <property type="match status" value="1"/>
</dbReference>
<dbReference type="PANTHER" id="PTHR37297">
    <property type="entry name" value="PROTEIN NRDI"/>
    <property type="match status" value="1"/>
</dbReference>
<dbReference type="PANTHER" id="PTHR37297:SF1">
    <property type="entry name" value="PROTEIN NRDI"/>
    <property type="match status" value="1"/>
</dbReference>
<dbReference type="Pfam" id="PF07972">
    <property type="entry name" value="Flavodoxin_NdrI"/>
    <property type="match status" value="1"/>
</dbReference>
<dbReference type="PIRSF" id="PIRSF005087">
    <property type="entry name" value="NrdI"/>
    <property type="match status" value="1"/>
</dbReference>
<dbReference type="SUPFAM" id="SSF52218">
    <property type="entry name" value="Flavoproteins"/>
    <property type="match status" value="1"/>
</dbReference>
<protein>
    <recommendedName>
        <fullName evidence="1">Protein NrdI</fullName>
    </recommendedName>
</protein>
<proteinExistence type="inferred from homology"/>
<reference key="1">
    <citation type="submission" date="2007-09" db="EMBL/GenBank/DDBJ databases">
        <title>Complete sequence of chromosome of Serratia proteamaculans 568.</title>
        <authorList>
            <consortium name="US DOE Joint Genome Institute"/>
            <person name="Copeland A."/>
            <person name="Lucas S."/>
            <person name="Lapidus A."/>
            <person name="Barry K."/>
            <person name="Glavina del Rio T."/>
            <person name="Dalin E."/>
            <person name="Tice H."/>
            <person name="Pitluck S."/>
            <person name="Chain P."/>
            <person name="Malfatti S."/>
            <person name="Shin M."/>
            <person name="Vergez L."/>
            <person name="Schmutz J."/>
            <person name="Larimer F."/>
            <person name="Land M."/>
            <person name="Hauser L."/>
            <person name="Kyrpides N."/>
            <person name="Kim E."/>
            <person name="Taghavi S."/>
            <person name="Newman L."/>
            <person name="Vangronsveld J."/>
            <person name="van der Lelie D."/>
            <person name="Richardson P."/>
        </authorList>
    </citation>
    <scope>NUCLEOTIDE SEQUENCE [LARGE SCALE GENOMIC DNA]</scope>
    <source>
        <strain>568</strain>
    </source>
</reference>
<organism>
    <name type="scientific">Serratia proteamaculans (strain 568)</name>
    <dbReference type="NCBI Taxonomy" id="399741"/>
    <lineage>
        <taxon>Bacteria</taxon>
        <taxon>Pseudomonadati</taxon>
        <taxon>Pseudomonadota</taxon>
        <taxon>Gammaproteobacteria</taxon>
        <taxon>Enterobacterales</taxon>
        <taxon>Yersiniaceae</taxon>
        <taxon>Serratia</taxon>
    </lineage>
</organism>